<name>RK2_HELAN</name>
<organism>
    <name type="scientific">Helianthus annuus</name>
    <name type="common">Common sunflower</name>
    <dbReference type="NCBI Taxonomy" id="4232"/>
    <lineage>
        <taxon>Eukaryota</taxon>
        <taxon>Viridiplantae</taxon>
        <taxon>Streptophyta</taxon>
        <taxon>Embryophyta</taxon>
        <taxon>Tracheophyta</taxon>
        <taxon>Spermatophyta</taxon>
        <taxon>Magnoliopsida</taxon>
        <taxon>eudicotyledons</taxon>
        <taxon>Gunneridae</taxon>
        <taxon>Pentapetalae</taxon>
        <taxon>asterids</taxon>
        <taxon>campanulids</taxon>
        <taxon>Asterales</taxon>
        <taxon>Asteraceae</taxon>
        <taxon>Asteroideae</taxon>
        <taxon>Heliantheae alliance</taxon>
        <taxon>Heliantheae</taxon>
        <taxon>Helianthus</taxon>
    </lineage>
</organism>
<sequence>MAINLYKTSTPSTRNGTVDSQVKSNPRNNLIYGQHHCGKGRNARGIITAGHRGGGHKRLYRKIDFRRNEKDIYGRIVTIEYDPNRNAYICLIHYRDGEKRYILHPRGAIIGDTIVSGTEVPIKMGNALPLTDMPLGTAIHNIEITLGKGGQLARAAGAVAKLIAKEGKSATLKLPSGEVRLISKNCSATVGQVGNVGVNQKNLGRAGSKRWLGKRPVVRGVVMNPVDHPHGGGEGRAPIGRKKPTTPWGYPALGKRSRKRNKYSDNLILRRRSK</sequence>
<dbReference type="EMBL" id="DQ383815">
    <property type="protein sequence ID" value="ABD47187.1"/>
    <property type="molecule type" value="Genomic_DNA"/>
</dbReference>
<dbReference type="EMBL" id="DQ383815">
    <property type="protein sequence ID" value="ABD47211.1"/>
    <property type="molecule type" value="Genomic_DNA"/>
</dbReference>
<dbReference type="SMR" id="Q1KXP4"/>
<dbReference type="KEGG" id="han:4055605"/>
<dbReference type="KEGG" id="han:4055682"/>
<dbReference type="OrthoDB" id="563959at2759"/>
<dbReference type="GO" id="GO:0009507">
    <property type="term" value="C:chloroplast"/>
    <property type="evidence" value="ECO:0007669"/>
    <property type="project" value="UniProtKB-SubCell"/>
</dbReference>
<dbReference type="GO" id="GO:0015934">
    <property type="term" value="C:large ribosomal subunit"/>
    <property type="evidence" value="ECO:0007669"/>
    <property type="project" value="InterPro"/>
</dbReference>
<dbReference type="GO" id="GO:0019843">
    <property type="term" value="F:rRNA binding"/>
    <property type="evidence" value="ECO:0007669"/>
    <property type="project" value="UniProtKB-UniRule"/>
</dbReference>
<dbReference type="GO" id="GO:0003735">
    <property type="term" value="F:structural constituent of ribosome"/>
    <property type="evidence" value="ECO:0007669"/>
    <property type="project" value="InterPro"/>
</dbReference>
<dbReference type="GO" id="GO:0016740">
    <property type="term" value="F:transferase activity"/>
    <property type="evidence" value="ECO:0007669"/>
    <property type="project" value="InterPro"/>
</dbReference>
<dbReference type="GO" id="GO:0006412">
    <property type="term" value="P:translation"/>
    <property type="evidence" value="ECO:0007669"/>
    <property type="project" value="UniProtKB-UniRule"/>
</dbReference>
<dbReference type="FunFam" id="4.10.950.10:FF:000001">
    <property type="entry name" value="50S ribosomal protein L2"/>
    <property type="match status" value="1"/>
</dbReference>
<dbReference type="FunFam" id="2.30.30.30:FF:000008">
    <property type="entry name" value="50S ribosomal protein L2, chloroplastic"/>
    <property type="match status" value="1"/>
</dbReference>
<dbReference type="FunFam" id="2.40.50.140:FF:000029">
    <property type="entry name" value="50S ribosomal protein L2, chloroplastic"/>
    <property type="match status" value="1"/>
</dbReference>
<dbReference type="Gene3D" id="2.30.30.30">
    <property type="match status" value="1"/>
</dbReference>
<dbReference type="Gene3D" id="2.40.50.140">
    <property type="entry name" value="Nucleic acid-binding proteins"/>
    <property type="match status" value="1"/>
</dbReference>
<dbReference type="Gene3D" id="4.10.950.10">
    <property type="entry name" value="Ribosomal protein L2, domain 3"/>
    <property type="match status" value="1"/>
</dbReference>
<dbReference type="HAMAP" id="MF_01320_B">
    <property type="entry name" value="Ribosomal_uL2_B"/>
    <property type="match status" value="1"/>
</dbReference>
<dbReference type="InterPro" id="IPR012340">
    <property type="entry name" value="NA-bd_OB-fold"/>
</dbReference>
<dbReference type="InterPro" id="IPR014722">
    <property type="entry name" value="Rib_uL2_dom2"/>
</dbReference>
<dbReference type="InterPro" id="IPR002171">
    <property type="entry name" value="Ribosomal_uL2"/>
</dbReference>
<dbReference type="InterPro" id="IPR005880">
    <property type="entry name" value="Ribosomal_uL2_bac/org-type"/>
</dbReference>
<dbReference type="InterPro" id="IPR022669">
    <property type="entry name" value="Ribosomal_uL2_C"/>
</dbReference>
<dbReference type="InterPro" id="IPR022671">
    <property type="entry name" value="Ribosomal_uL2_CS"/>
</dbReference>
<dbReference type="InterPro" id="IPR014726">
    <property type="entry name" value="Ribosomal_uL2_dom3"/>
</dbReference>
<dbReference type="InterPro" id="IPR022666">
    <property type="entry name" value="Ribosomal_uL2_RNA-bd_dom"/>
</dbReference>
<dbReference type="InterPro" id="IPR008991">
    <property type="entry name" value="Translation_prot_SH3-like_sf"/>
</dbReference>
<dbReference type="NCBIfam" id="TIGR01171">
    <property type="entry name" value="rplB_bact"/>
    <property type="match status" value="1"/>
</dbReference>
<dbReference type="PANTHER" id="PTHR13691:SF5">
    <property type="entry name" value="LARGE RIBOSOMAL SUBUNIT PROTEIN UL2M"/>
    <property type="match status" value="1"/>
</dbReference>
<dbReference type="PANTHER" id="PTHR13691">
    <property type="entry name" value="RIBOSOMAL PROTEIN L2"/>
    <property type="match status" value="1"/>
</dbReference>
<dbReference type="Pfam" id="PF00181">
    <property type="entry name" value="Ribosomal_L2"/>
    <property type="match status" value="1"/>
</dbReference>
<dbReference type="Pfam" id="PF03947">
    <property type="entry name" value="Ribosomal_L2_C"/>
    <property type="match status" value="1"/>
</dbReference>
<dbReference type="PIRSF" id="PIRSF002158">
    <property type="entry name" value="Ribosomal_L2"/>
    <property type="match status" value="1"/>
</dbReference>
<dbReference type="SMART" id="SM01383">
    <property type="entry name" value="Ribosomal_L2"/>
    <property type="match status" value="1"/>
</dbReference>
<dbReference type="SMART" id="SM01382">
    <property type="entry name" value="Ribosomal_L2_C"/>
    <property type="match status" value="1"/>
</dbReference>
<dbReference type="SUPFAM" id="SSF50249">
    <property type="entry name" value="Nucleic acid-binding proteins"/>
    <property type="match status" value="1"/>
</dbReference>
<dbReference type="SUPFAM" id="SSF50104">
    <property type="entry name" value="Translation proteins SH3-like domain"/>
    <property type="match status" value="1"/>
</dbReference>
<dbReference type="PROSITE" id="PS00467">
    <property type="entry name" value="RIBOSOMAL_L2"/>
    <property type="match status" value="1"/>
</dbReference>
<evidence type="ECO:0000250" key="1"/>
<evidence type="ECO:0000255" key="2">
    <source>
        <dbReference type="HAMAP-Rule" id="MF_01320"/>
    </source>
</evidence>
<evidence type="ECO:0000256" key="3">
    <source>
        <dbReference type="SAM" id="MobiDB-lite"/>
    </source>
</evidence>
<evidence type="ECO:0000305" key="4"/>
<accession>Q1KXP4</accession>
<proteinExistence type="inferred from homology"/>
<geneLocation type="chloroplast"/>
<comment type="subunit">
    <text evidence="1">Part of the 50S ribosomal subunit.</text>
</comment>
<comment type="subcellular location">
    <subcellularLocation>
        <location>Plastid</location>
        <location>Chloroplast</location>
    </subcellularLocation>
</comment>
<comment type="similarity">
    <text evidence="4">Belongs to the universal ribosomal protein uL2 family.</text>
</comment>
<keyword id="KW-0150">Chloroplast</keyword>
<keyword id="KW-0934">Plastid</keyword>
<keyword id="KW-0687">Ribonucleoprotein</keyword>
<keyword id="KW-0689">Ribosomal protein</keyword>
<gene>
    <name type="primary">rpl2-A</name>
</gene>
<gene>
    <name type="primary">rpl2-B</name>
</gene>
<protein>
    <recommendedName>
        <fullName evidence="2">Large ribosomal subunit protein uL2cz/uL2cy</fullName>
    </recommendedName>
    <alternativeName>
        <fullName evidence="4">50S ribosomal protein L2, chloroplastic</fullName>
    </alternativeName>
</protein>
<reference key="1">
    <citation type="submission" date="2006-01" db="EMBL/GenBank/DDBJ databases">
        <title>A comparison of the first two published chloroplast genomes in Asteraceae: Lactuca and Helianthus.</title>
        <authorList>
            <person name="Timme R.E."/>
            <person name="Kuehl J.V."/>
            <person name="Boore J.L."/>
            <person name="Jansen R.K."/>
        </authorList>
    </citation>
    <scope>NUCLEOTIDE SEQUENCE [LARGE SCALE GENOMIC DNA]</scope>
    <source>
        <strain>cv. HA383</strain>
    </source>
</reference>
<feature type="chain" id="PRO_0000277090" description="Large ribosomal subunit protein uL2cz/uL2cy">
    <location>
        <begin position="1"/>
        <end position="274"/>
    </location>
</feature>
<feature type="region of interest" description="Disordered" evidence="3">
    <location>
        <begin position="1"/>
        <end position="22"/>
    </location>
</feature>
<feature type="region of interest" description="Disordered" evidence="3">
    <location>
        <begin position="224"/>
        <end position="274"/>
    </location>
</feature>